<proteinExistence type="inferred from homology"/>
<protein>
    <recommendedName>
        <fullName>Small hydrophobic protein</fullName>
    </recommendedName>
</protein>
<organism>
    <name type="scientific">Mumps virus (strain Belfast)</name>
    <name type="common">MuV</name>
    <dbReference type="NCBI Taxonomy" id="11166"/>
    <lineage>
        <taxon>Viruses</taxon>
        <taxon>Riboviria</taxon>
        <taxon>Orthornavirae</taxon>
        <taxon>Negarnaviricota</taxon>
        <taxon>Haploviricotina</taxon>
        <taxon>Monjiviricetes</taxon>
        <taxon>Mononegavirales</taxon>
        <taxon>Paramyxoviridae</taxon>
        <taxon>Rubulavirinae</taxon>
        <taxon>Orthorubulavirus</taxon>
        <taxon>Orthorubulavirus parotitidis</taxon>
        <taxon>Mumps orthorubulavirus</taxon>
    </lineage>
</organism>
<feature type="chain" id="PRO_0000142871" description="Small hydrophobic protein">
    <location>
        <begin position="1"/>
        <end position="57"/>
    </location>
</feature>
<feature type="topological domain" description="Virion surface" evidence="3">
    <location>
        <begin position="1"/>
        <end position="8"/>
    </location>
</feature>
<feature type="transmembrane region" description="Helical" evidence="3">
    <location>
        <begin position="9"/>
        <end position="29"/>
    </location>
</feature>
<feature type="topological domain" description="Intravirion" evidence="3">
    <location>
        <begin position="30"/>
        <end position="57"/>
    </location>
</feature>
<comment type="function">
    <text evidence="2">Plays a role in the inhibition of the host NF-kappa-B pathway. This inhibition occurs at the receptor level, by preventing the signaling of TNFR1 as well as IL-1R and TLR3.</text>
</comment>
<comment type="subunit">
    <text evidence="1 2">Interacts with host TNFRSF1A, RIPK1 and IRAK1; these interactions interfere with host NF-kappa-B activation at the level of receptor complexes (By similarity). Interacts with host protein UBQLN4 (By similarity).</text>
</comment>
<comment type="subcellular location">
    <subcellularLocation>
        <location evidence="2">Virion membrane</location>
        <topology evidence="2">Single-pass membrane protein</topology>
    </subcellularLocation>
    <subcellularLocation>
        <location evidence="2">Host cell membrane</location>
        <topology evidence="2">Single-pass membrane protein</topology>
    </subcellularLocation>
</comment>
<comment type="similarity">
    <text evidence="4">Belongs to the rubulavirus small hydrophobic protein family.</text>
</comment>
<organismHost>
    <name type="scientific">Homo sapiens</name>
    <name type="common">Human</name>
    <dbReference type="NCBI Taxonomy" id="9606"/>
</organismHost>
<keyword id="KW-1032">Host cell membrane</keyword>
<keyword id="KW-1043">Host membrane</keyword>
<keyword id="KW-0945">Host-virus interaction</keyword>
<keyword id="KW-1100">Inhibition of host NF-kappa-B by virus</keyword>
<keyword id="KW-0472">Membrane</keyword>
<keyword id="KW-0812">Transmembrane</keyword>
<keyword id="KW-1133">Transmembrane helix</keyword>
<keyword id="KW-0946">Virion</keyword>
<sequence length="57" mass="6814">MPAIQPPLYLTFLLLILLYRIITLYVWVVSTITYKTAVRHAALYQRSLFRWSFDHSL</sequence>
<name>SH_MUMPB</name>
<evidence type="ECO:0000250" key="1">
    <source>
        <dbReference type="UniProtKB" id="P22110"/>
    </source>
</evidence>
<evidence type="ECO:0000250" key="2">
    <source>
        <dbReference type="UniProtKB" id="P22112"/>
    </source>
</evidence>
<evidence type="ECO:0000255" key="3"/>
<evidence type="ECO:0000305" key="4"/>
<reference key="1">
    <citation type="journal article" date="1993" name="Arch. Virol.">
        <title>Identification of a new mumps virus lineage by nucleotide sequence analysis of the SH gene of ten different strains.</title>
        <authorList>
            <person name="Yeo R.P."/>
            <person name="Afzal M.A."/>
            <person name="Forsey T."/>
            <person name="Rima B.K."/>
        </authorList>
    </citation>
    <scope>NUCLEOTIDE SEQUENCE [GENOMIC RNA]</scope>
</reference>
<dbReference type="EMBL" id="X63709">
    <property type="protein sequence ID" value="CAA45242.1"/>
    <property type="molecule type" value="Genomic_RNA"/>
</dbReference>
<dbReference type="PIR" id="S19866">
    <property type="entry name" value="SHNZBF"/>
</dbReference>
<dbReference type="SMR" id="P28082"/>
<dbReference type="GO" id="GO:0020002">
    <property type="term" value="C:host cell plasma membrane"/>
    <property type="evidence" value="ECO:0007669"/>
    <property type="project" value="UniProtKB-SubCell"/>
</dbReference>
<dbReference type="GO" id="GO:0016020">
    <property type="term" value="C:membrane"/>
    <property type="evidence" value="ECO:0007669"/>
    <property type="project" value="UniProtKB-KW"/>
</dbReference>
<dbReference type="GO" id="GO:0055036">
    <property type="term" value="C:virion membrane"/>
    <property type="evidence" value="ECO:0007669"/>
    <property type="project" value="UniProtKB-SubCell"/>
</dbReference>
<dbReference type="GO" id="GO:0085034">
    <property type="term" value="P:symbiont-mediated suppression of host NF-kappaB cascade"/>
    <property type="evidence" value="ECO:0007669"/>
    <property type="project" value="UniProtKB-KW"/>
</dbReference>
<dbReference type="InterPro" id="IPR001477">
    <property type="entry name" value="SH"/>
</dbReference>
<dbReference type="Pfam" id="PF01445">
    <property type="entry name" value="SH"/>
    <property type="match status" value="1"/>
</dbReference>
<dbReference type="PIRSF" id="PIRSF003923">
    <property type="entry name" value="SH"/>
    <property type="match status" value="1"/>
</dbReference>
<accession>P28082</accession>
<gene>
    <name type="primary">SH</name>
</gene>